<sequence>MSRVGVMVLGPAGAGKSTFCNSIISHMQTVGRRAHIVNLDPAAEATKYEFTIDIRDLISLDDVMEEMDLGPNGALIYCFEYLLKNLDWLDEEIGDFNDEYLIFDCPGQIELYTHIPVLPNIVRHLTQQLNFNLCATYLLEAPFVIDSSKFFSGALSAMSAMILLELPHINVLSKLDLIKGDINKKKLKRFLNPDAMLLMETEGMNQASNPKFLRLNQCIANLVDDFGMVQFLPLESNNPDSIETILSYVDDITQWAEGQEQKEPNDQIDVEE</sequence>
<protein>
    <recommendedName>
        <fullName evidence="5">GPN-loop GTPase 3</fullName>
        <ecNumber evidence="6">3.6.5.-</ecNumber>
    </recommendedName>
</protein>
<reference key="1">
    <citation type="journal article" date="1997" name="Nature">
        <title>The nucleotide sequence of Saccharomyces cerevisiae chromosome XII.</title>
        <authorList>
            <person name="Johnston M."/>
            <person name="Hillier L.W."/>
            <person name="Riles L."/>
            <person name="Albermann K."/>
            <person name="Andre B."/>
            <person name="Ansorge W."/>
            <person name="Benes V."/>
            <person name="Brueckner M."/>
            <person name="Delius H."/>
            <person name="Dubois E."/>
            <person name="Duesterhoeft A."/>
            <person name="Entian K.-D."/>
            <person name="Floeth M."/>
            <person name="Goffeau A."/>
            <person name="Hebling U."/>
            <person name="Heumann K."/>
            <person name="Heuss-Neitzel D."/>
            <person name="Hilbert H."/>
            <person name="Hilger F."/>
            <person name="Kleine K."/>
            <person name="Koetter P."/>
            <person name="Louis E.J."/>
            <person name="Messenguy F."/>
            <person name="Mewes H.-W."/>
            <person name="Miosga T."/>
            <person name="Moestl D."/>
            <person name="Mueller-Auer S."/>
            <person name="Nentwich U."/>
            <person name="Obermaier B."/>
            <person name="Piravandi E."/>
            <person name="Pohl T.M."/>
            <person name="Portetelle D."/>
            <person name="Purnelle B."/>
            <person name="Rechmann S."/>
            <person name="Rieger M."/>
            <person name="Rinke M."/>
            <person name="Rose M."/>
            <person name="Scharfe M."/>
            <person name="Scherens B."/>
            <person name="Scholler P."/>
            <person name="Schwager C."/>
            <person name="Schwarz S."/>
            <person name="Underwood A.P."/>
            <person name="Urrestarazu L.A."/>
            <person name="Vandenbol M."/>
            <person name="Verhasselt P."/>
            <person name="Vierendeels F."/>
            <person name="Voet M."/>
            <person name="Volckaert G."/>
            <person name="Voss H."/>
            <person name="Wambutt R."/>
            <person name="Wedler E."/>
            <person name="Wedler H."/>
            <person name="Zimmermann F.K."/>
            <person name="Zollner A."/>
            <person name="Hani J."/>
            <person name="Hoheisel J.D."/>
        </authorList>
    </citation>
    <scope>NUCLEOTIDE SEQUENCE [LARGE SCALE GENOMIC DNA]</scope>
    <source>
        <strain>ATCC 204508 / S288c</strain>
    </source>
</reference>
<reference key="2">
    <citation type="journal article" date="2014" name="G3 (Bethesda)">
        <title>The reference genome sequence of Saccharomyces cerevisiae: Then and now.</title>
        <authorList>
            <person name="Engel S.R."/>
            <person name="Dietrich F.S."/>
            <person name="Fisk D.G."/>
            <person name="Binkley G."/>
            <person name="Balakrishnan R."/>
            <person name="Costanzo M.C."/>
            <person name="Dwight S.S."/>
            <person name="Hitz B.C."/>
            <person name="Karra K."/>
            <person name="Nash R.S."/>
            <person name="Weng S."/>
            <person name="Wong E.D."/>
            <person name="Lloyd P."/>
            <person name="Skrzypek M.S."/>
            <person name="Miyasato S.R."/>
            <person name="Simison M."/>
            <person name="Cherry J.M."/>
        </authorList>
    </citation>
    <scope>GENOME REANNOTATION</scope>
    <source>
        <strain>ATCC 204508 / S288c</strain>
    </source>
</reference>
<reference key="3">
    <citation type="journal article" date="2011" name="Cell Cycle">
        <title>A role for GPN-loop GTPase yGPN1 in sister chromatid cohesion.</title>
        <authorList>
            <person name="Alonso B."/>
            <person name="Chaussinand G."/>
            <person name="Armengaud J."/>
            <person name="Godon C."/>
        </authorList>
    </citation>
    <scope>GENE NAME</scope>
</reference>
<reference key="4">
    <citation type="journal article" date="2013" name="Cell Cycle">
        <title>Eukaryotic GPN-loop GTPases paralogs use a dimeric assembly reminiscent of archeal GPN.</title>
        <authorList>
            <person name="Alonso B."/>
            <person name="Beraud C."/>
            <person name="Meguellati S."/>
            <person name="Chen S.W."/>
            <person name="Pellequer J.L."/>
            <person name="Armengaud J."/>
            <person name="Godon C."/>
        </authorList>
    </citation>
    <scope>FUNCTION</scope>
    <scope>INTERACTION WITH NPA3</scope>
    <scope>MUTAGENESIS OF GLU-110</scope>
</reference>
<reference key="5">
    <citation type="journal article" date="2013" name="Genetics">
        <title>Biogenesis of RNA polymerases II and III requires the conserved GPN small GTPases in Saccharomyces cerevisiae.</title>
        <authorList>
            <person name="Minaker S.W."/>
            <person name="Filiatrault M.C."/>
            <person name="Ben-Aroya S."/>
            <person name="Hieter P."/>
            <person name="Stirling P.C."/>
        </authorList>
    </citation>
    <scope>FUNCTION</scope>
    <scope>INTERACTION WITH GPN2</scope>
</reference>
<keyword id="KW-0342">GTP-binding</keyword>
<keyword id="KW-0378">Hydrolase</keyword>
<keyword id="KW-0547">Nucleotide-binding</keyword>
<keyword id="KW-1185">Reference proteome</keyword>
<accession>Q06543</accession>
<accession>D6VYP1</accession>
<name>GPN3_YEAST</name>
<organism>
    <name type="scientific">Saccharomyces cerevisiae (strain ATCC 204508 / S288c)</name>
    <name type="common">Baker's yeast</name>
    <dbReference type="NCBI Taxonomy" id="559292"/>
    <lineage>
        <taxon>Eukaryota</taxon>
        <taxon>Fungi</taxon>
        <taxon>Dikarya</taxon>
        <taxon>Ascomycota</taxon>
        <taxon>Saccharomycotina</taxon>
        <taxon>Saccharomycetes</taxon>
        <taxon>Saccharomycetales</taxon>
        <taxon>Saccharomycetaceae</taxon>
        <taxon>Saccharomyces</taxon>
    </lineage>
</organism>
<comment type="function">
    <text evidence="3 4">Small GTPase required for proper nuclear localization of RNA polymerase II and III (RNAPII and RNAPIII). May act at an RNAP assembly step prior to nuclear import (PubMed:23267056). Promotes sister chromatid separation during anaphase (PubMed:23324351).</text>
</comment>
<comment type="subunit">
    <text evidence="1 3 4">Heterodimers with NPA3/GPN1 or GPN2 (PubMed:23267056, PubMed:23324351). Binds to RNA polymerase II (RNAPII) (By similarity).</text>
</comment>
<comment type="similarity">
    <text evidence="6">Belongs to the GPN-loop GTPase family.</text>
</comment>
<gene>
    <name evidence="5" type="primary">GPN3</name>
    <name evidence="7" type="ordered locus">YLR243W</name>
</gene>
<dbReference type="EC" id="3.6.5.-" evidence="6"/>
<dbReference type="EMBL" id="U20865">
    <property type="protein sequence ID" value="AAB67394.1"/>
    <property type="molecule type" value="Genomic_DNA"/>
</dbReference>
<dbReference type="EMBL" id="BK006945">
    <property type="protein sequence ID" value="DAA09557.1"/>
    <property type="molecule type" value="Genomic_DNA"/>
</dbReference>
<dbReference type="PIR" id="S59389">
    <property type="entry name" value="S59389"/>
</dbReference>
<dbReference type="RefSeq" id="NP_013344.1">
    <property type="nucleotide sequence ID" value="NM_001182130.1"/>
</dbReference>
<dbReference type="SMR" id="Q06543"/>
<dbReference type="BioGRID" id="31510">
    <property type="interactions" value="215"/>
</dbReference>
<dbReference type="DIP" id="DIP-1911N"/>
<dbReference type="FunCoup" id="Q06543">
    <property type="interactions" value="1028"/>
</dbReference>
<dbReference type="IntAct" id="Q06543">
    <property type="interactions" value="11"/>
</dbReference>
<dbReference type="MINT" id="Q06543"/>
<dbReference type="STRING" id="4932.YLR243W"/>
<dbReference type="PaxDb" id="4932-YLR243W"/>
<dbReference type="PeptideAtlas" id="Q06543"/>
<dbReference type="EnsemblFungi" id="YLR243W_mRNA">
    <property type="protein sequence ID" value="YLR243W"/>
    <property type="gene ID" value="YLR243W"/>
</dbReference>
<dbReference type="GeneID" id="850944"/>
<dbReference type="KEGG" id="sce:YLR243W"/>
<dbReference type="AGR" id="SGD:S000004233"/>
<dbReference type="SGD" id="S000004233">
    <property type="gene designation" value="GPN3"/>
</dbReference>
<dbReference type="VEuPathDB" id="FungiDB:YLR243W"/>
<dbReference type="eggNOG" id="KOG1534">
    <property type="taxonomic scope" value="Eukaryota"/>
</dbReference>
<dbReference type="GeneTree" id="ENSGT00950000183172"/>
<dbReference type="HOGENOM" id="CLU_037460_0_0_1"/>
<dbReference type="InParanoid" id="Q06543"/>
<dbReference type="OMA" id="LYTHMTV"/>
<dbReference type="OrthoDB" id="5839at2759"/>
<dbReference type="BioCyc" id="YEAST:G3O-32350-MONOMER"/>
<dbReference type="BioGRID-ORCS" id="850944">
    <property type="hits" value="1 hit in 10 CRISPR screens"/>
</dbReference>
<dbReference type="PRO" id="PR:Q06543"/>
<dbReference type="Proteomes" id="UP000002311">
    <property type="component" value="Chromosome XII"/>
</dbReference>
<dbReference type="RNAct" id="Q06543">
    <property type="molecule type" value="protein"/>
</dbReference>
<dbReference type="GO" id="GO:0005525">
    <property type="term" value="F:GTP binding"/>
    <property type="evidence" value="ECO:0007669"/>
    <property type="project" value="UniProtKB-KW"/>
</dbReference>
<dbReference type="GO" id="GO:0003924">
    <property type="term" value="F:GTPase activity"/>
    <property type="evidence" value="ECO:0000250"/>
    <property type="project" value="SGD"/>
</dbReference>
<dbReference type="GO" id="GO:0007064">
    <property type="term" value="P:mitotic sister chromatid cohesion"/>
    <property type="evidence" value="ECO:0000315"/>
    <property type="project" value="SGD"/>
</dbReference>
<dbReference type="GO" id="GO:0006606">
    <property type="term" value="P:protein import into nucleus"/>
    <property type="evidence" value="ECO:0000315"/>
    <property type="project" value="SGD"/>
</dbReference>
<dbReference type="CDD" id="cd17872">
    <property type="entry name" value="GPN3"/>
    <property type="match status" value="1"/>
</dbReference>
<dbReference type="FunFam" id="3.40.50.300:FF:000552">
    <property type="entry name" value="GPN-loop GTPase 3"/>
    <property type="match status" value="1"/>
</dbReference>
<dbReference type="Gene3D" id="3.40.50.300">
    <property type="entry name" value="P-loop containing nucleotide triphosphate hydrolases"/>
    <property type="match status" value="1"/>
</dbReference>
<dbReference type="InterPro" id="IPR004130">
    <property type="entry name" value="Gpn"/>
</dbReference>
<dbReference type="InterPro" id="IPR030228">
    <property type="entry name" value="Gpn3"/>
</dbReference>
<dbReference type="InterPro" id="IPR027417">
    <property type="entry name" value="P-loop_NTPase"/>
</dbReference>
<dbReference type="PANTHER" id="PTHR21231:SF7">
    <property type="entry name" value="GPN-LOOP GTPASE 3"/>
    <property type="match status" value="1"/>
</dbReference>
<dbReference type="PANTHER" id="PTHR21231">
    <property type="entry name" value="XPA-BINDING PROTEIN 1-RELATED"/>
    <property type="match status" value="1"/>
</dbReference>
<dbReference type="Pfam" id="PF03029">
    <property type="entry name" value="ATP_bind_1"/>
    <property type="match status" value="1"/>
</dbReference>
<dbReference type="SUPFAM" id="SSF52540">
    <property type="entry name" value="P-loop containing nucleoside triphosphate hydrolases"/>
    <property type="match status" value="1"/>
</dbReference>
<feature type="chain" id="PRO_0000255597" description="GPN-loop GTPase 3">
    <location>
        <begin position="1"/>
        <end position="272"/>
    </location>
</feature>
<feature type="short sequence motif" description="Gly-Pro-Asn (GPN)-loop; involved in dimer interface" evidence="2">
    <location>
        <begin position="70"/>
        <end position="72"/>
    </location>
</feature>
<feature type="binding site" evidence="2">
    <location>
        <begin position="13"/>
        <end position="18"/>
    </location>
    <ligand>
        <name>GTP</name>
        <dbReference type="ChEBI" id="CHEBI:37565"/>
    </ligand>
</feature>
<feature type="binding site" evidence="2">
    <location>
        <begin position="173"/>
        <end position="176"/>
    </location>
    <ligand>
        <name>GTP</name>
        <dbReference type="ChEBI" id="CHEBI:37565"/>
    </ligand>
</feature>
<feature type="site" description="Stabilizes the phosphate intermediate; shared with dimeric partner" evidence="2">
    <location>
        <position position="72"/>
    </location>
</feature>
<feature type="mutagenesis site" description="Impairs heterodimer formation with NPA3/GPN1." evidence="4">
    <original>E</original>
    <variation>K</variation>
    <variation>A</variation>
    <location>
        <position position="110"/>
    </location>
</feature>
<proteinExistence type="evidence at protein level"/>
<evidence type="ECO:0000250" key="1">
    <source>
        <dbReference type="UniProtKB" id="Q9UHW5"/>
    </source>
</evidence>
<evidence type="ECO:0000250" key="2">
    <source>
        <dbReference type="UniProtKB" id="Q9UYR9"/>
    </source>
</evidence>
<evidence type="ECO:0000269" key="3">
    <source>
    </source>
</evidence>
<evidence type="ECO:0000269" key="4">
    <source>
    </source>
</evidence>
<evidence type="ECO:0000303" key="5">
    <source>
    </source>
</evidence>
<evidence type="ECO:0000305" key="6"/>
<evidence type="ECO:0000312" key="7">
    <source>
        <dbReference type="SGD" id="S000004233"/>
    </source>
</evidence>